<protein>
    <recommendedName>
        <fullName evidence="1">NADPH-dependent 7-cyano-7-deazaguanine reductase</fullName>
        <ecNumber evidence="1">1.7.1.13</ecNumber>
    </recommendedName>
    <alternativeName>
        <fullName evidence="1">7-cyano-7-carbaguanine reductase</fullName>
    </alternativeName>
    <alternativeName>
        <fullName evidence="1">NADPH-dependent nitrile oxidoreductase</fullName>
    </alternativeName>
    <alternativeName>
        <fullName evidence="1">PreQ(0) reductase</fullName>
    </alternativeName>
</protein>
<feature type="chain" id="PRO_0000247689" description="NADPH-dependent 7-cyano-7-deazaguanine reductase">
    <location>
        <begin position="1"/>
        <end position="140"/>
    </location>
</feature>
<feature type="active site" description="Thioimide intermediate" evidence="1">
    <location>
        <position position="49"/>
    </location>
</feature>
<feature type="active site" description="Proton donor" evidence="1">
    <location>
        <position position="56"/>
    </location>
</feature>
<feature type="binding site" evidence="1">
    <location>
        <begin position="71"/>
        <end position="73"/>
    </location>
    <ligand>
        <name>substrate</name>
    </ligand>
</feature>
<feature type="binding site" evidence="1">
    <location>
        <begin position="90"/>
        <end position="91"/>
    </location>
    <ligand>
        <name>substrate</name>
    </ligand>
</feature>
<comment type="function">
    <text evidence="1">Catalyzes the NADPH-dependent reduction of 7-cyano-7-deazaguanine (preQ0) to 7-aminomethyl-7-deazaguanine (preQ1).</text>
</comment>
<comment type="catalytic activity">
    <reaction evidence="1">
        <text>7-aminomethyl-7-carbaguanine + 2 NADP(+) = 7-cyano-7-deazaguanine + 2 NADPH + 3 H(+)</text>
        <dbReference type="Rhea" id="RHEA:13409"/>
        <dbReference type="ChEBI" id="CHEBI:15378"/>
        <dbReference type="ChEBI" id="CHEBI:45075"/>
        <dbReference type="ChEBI" id="CHEBI:57783"/>
        <dbReference type="ChEBI" id="CHEBI:58349"/>
        <dbReference type="ChEBI" id="CHEBI:58703"/>
        <dbReference type="EC" id="1.7.1.13"/>
    </reaction>
</comment>
<comment type="pathway">
    <text evidence="1">tRNA modification; tRNA-queuosine biosynthesis.</text>
</comment>
<comment type="subcellular location">
    <subcellularLocation>
        <location evidence="1">Cytoplasm</location>
    </subcellularLocation>
</comment>
<comment type="similarity">
    <text evidence="1">Belongs to the GTP cyclohydrolase I family. QueF type 1 subfamily.</text>
</comment>
<dbReference type="EC" id="1.7.1.13" evidence="1"/>
<dbReference type="EMBL" id="CP000095">
    <property type="protein sequence ID" value="AAZ58481.1"/>
    <property type="molecule type" value="Genomic_DNA"/>
</dbReference>
<dbReference type="SMR" id="Q46J47"/>
<dbReference type="STRING" id="59920.PMN2A_0991"/>
<dbReference type="KEGG" id="pmn:PMN2A_0991"/>
<dbReference type="HOGENOM" id="CLU_102489_1_1_3"/>
<dbReference type="PhylomeDB" id="Q46J47"/>
<dbReference type="UniPathway" id="UPA00392"/>
<dbReference type="Proteomes" id="UP000002535">
    <property type="component" value="Chromosome"/>
</dbReference>
<dbReference type="GO" id="GO:0005737">
    <property type="term" value="C:cytoplasm"/>
    <property type="evidence" value="ECO:0007669"/>
    <property type="project" value="UniProtKB-SubCell"/>
</dbReference>
<dbReference type="GO" id="GO:0033739">
    <property type="term" value="F:preQ1 synthase activity"/>
    <property type="evidence" value="ECO:0007669"/>
    <property type="project" value="UniProtKB-UniRule"/>
</dbReference>
<dbReference type="GO" id="GO:0008616">
    <property type="term" value="P:queuosine biosynthetic process"/>
    <property type="evidence" value="ECO:0007669"/>
    <property type="project" value="UniProtKB-UniRule"/>
</dbReference>
<dbReference type="GO" id="GO:0006400">
    <property type="term" value="P:tRNA modification"/>
    <property type="evidence" value="ECO:0007669"/>
    <property type="project" value="UniProtKB-UniRule"/>
</dbReference>
<dbReference type="Gene3D" id="3.30.1130.10">
    <property type="match status" value="1"/>
</dbReference>
<dbReference type="HAMAP" id="MF_00818">
    <property type="entry name" value="QueF_type1"/>
    <property type="match status" value="1"/>
</dbReference>
<dbReference type="InterPro" id="IPR043133">
    <property type="entry name" value="GTP-CH-I_C/QueF"/>
</dbReference>
<dbReference type="InterPro" id="IPR050084">
    <property type="entry name" value="NADPH_dep_7-cyano-7-deazaG_red"/>
</dbReference>
<dbReference type="InterPro" id="IPR029500">
    <property type="entry name" value="QueF"/>
</dbReference>
<dbReference type="InterPro" id="IPR016856">
    <property type="entry name" value="QueF_type1"/>
</dbReference>
<dbReference type="NCBIfam" id="TIGR03139">
    <property type="entry name" value="QueF-II"/>
    <property type="match status" value="1"/>
</dbReference>
<dbReference type="PANTHER" id="PTHR34354">
    <property type="entry name" value="NADPH-DEPENDENT 7-CYANO-7-DEAZAGUANINE REDUCTASE"/>
    <property type="match status" value="1"/>
</dbReference>
<dbReference type="PANTHER" id="PTHR34354:SF1">
    <property type="entry name" value="NADPH-DEPENDENT 7-CYANO-7-DEAZAGUANINE REDUCTASE"/>
    <property type="match status" value="1"/>
</dbReference>
<dbReference type="Pfam" id="PF14489">
    <property type="entry name" value="QueF"/>
    <property type="match status" value="1"/>
</dbReference>
<dbReference type="PIRSF" id="PIRSF027377">
    <property type="entry name" value="Nitrile_oxidored_QueF"/>
    <property type="match status" value="1"/>
</dbReference>
<dbReference type="SUPFAM" id="SSF55620">
    <property type="entry name" value="Tetrahydrobiopterin biosynthesis enzymes-like"/>
    <property type="match status" value="1"/>
</dbReference>
<proteinExistence type="inferred from homology"/>
<organism>
    <name type="scientific">Prochlorococcus marinus (strain NATL2A)</name>
    <dbReference type="NCBI Taxonomy" id="59920"/>
    <lineage>
        <taxon>Bacteria</taxon>
        <taxon>Bacillati</taxon>
        <taxon>Cyanobacteriota</taxon>
        <taxon>Cyanophyceae</taxon>
        <taxon>Synechococcales</taxon>
        <taxon>Prochlorococcaceae</taxon>
        <taxon>Prochlorococcus</taxon>
    </lineage>
</organism>
<reference key="1">
    <citation type="journal article" date="2007" name="PLoS Genet.">
        <title>Patterns and implications of gene gain and loss in the evolution of Prochlorococcus.</title>
        <authorList>
            <person name="Kettler G.C."/>
            <person name="Martiny A.C."/>
            <person name="Huang K."/>
            <person name="Zucker J."/>
            <person name="Coleman M.L."/>
            <person name="Rodrigue S."/>
            <person name="Chen F."/>
            <person name="Lapidus A."/>
            <person name="Ferriera S."/>
            <person name="Johnson J."/>
            <person name="Steglich C."/>
            <person name="Church G.M."/>
            <person name="Richardson P."/>
            <person name="Chisholm S.W."/>
        </authorList>
    </citation>
    <scope>NUCLEOTIDE SEQUENCE [LARGE SCALE GENOMIC DNA]</scope>
    <source>
        <strain>NATL2A</strain>
    </source>
</reference>
<keyword id="KW-0963">Cytoplasm</keyword>
<keyword id="KW-0521">NADP</keyword>
<keyword id="KW-0560">Oxidoreductase</keyword>
<keyword id="KW-0671">Queuosine biosynthesis</keyword>
<keyword id="KW-1185">Reference proteome</keyword>
<accession>Q46J47</accession>
<gene>
    <name evidence="1" type="primary">queF</name>
    <name type="ordered locus">PMN2A_0991</name>
</gene>
<evidence type="ECO:0000255" key="1">
    <source>
        <dbReference type="HAMAP-Rule" id="MF_00818"/>
    </source>
</evidence>
<sequence length="140" mass="16429">MIRQEKDIKDEIMYGEREIEAGSLICFPNPNINRDYEISIDFPEFTCKCPFSGYPDFATLKIKYQPNTKVIELKAIKLYLNSFREKKISHEEVTNKIIDDFVEVSDPKWMQLEADFNPRGNVHTIIRVCHGKRNNLELSL</sequence>
<name>QUEF_PROMT</name>